<proteinExistence type="evidence at protein level"/>
<protein>
    <recommendedName>
        <fullName>General transcription and DNA repair factor IIH helicase subunit XPD</fullName>
        <shortName>TFIIH subunit XPD</shortName>
        <ecNumber evidence="1">5.6.2.3</ecNumber>
    </recommendedName>
    <alternativeName>
        <fullName evidence="10">DNA 5'-3' helicase XPD</fullName>
    </alternativeName>
    <alternativeName>
        <fullName>ERCC2 homolog</fullName>
    </alternativeName>
    <alternativeName>
        <fullName>RAD3 homolog</fullName>
    </alternativeName>
    <alternativeName>
        <fullName>UV hypersensitive protein 6</fullName>
        <shortName>AtUVH6</shortName>
    </alternativeName>
    <alternativeName>
        <fullName>XPD homolog</fullName>
        <shortName evidence="6 7">AtXPD</shortName>
    </alternativeName>
</protein>
<comment type="function">
    <text evidence="1 3 5">ATP-dependent 5'-3' DNA helicase, component of the general transcription and DNA repair factor IIH (TFIIH) core complex, which is involved in general and transcription-coupled nucleotide excision repair (NER) of damaged DNA and, when complexed to CDK-activating kinase (CAK), involved in transcription by RNA polymerase II. In NER, TFIIH acts by opening DNA around the lesion to allow the excision of the damaged oligonucleotide and its replacement by a new DNA fragment. The ATP-dependent helicase activity of XPD is required for DNA opening. In transcription, TFIIH has an essential role in transcription initiation. When the pre-initiation complex (PIC) has been established, TFIIH is required for promoter opening and promoter escape. Phosphorylation of the C-terminal tail (CTD) of the largest subunit of RNA polymerase II by the kinase module CAK controls the initiation of transcription. XPD acts by forming a bridge between CAK and the core-TFIIH complex (By similarity). Essential during plant growth (PubMed:12857822). May negatively regulate a common response program mediated by UV damage and heat stress, that leads to tissue death and reduced chloroplast function (PubMed:9414549).</text>
</comment>
<comment type="catalytic activity">
    <reaction evidence="1">
        <text>Couples ATP hydrolysis with the unwinding of duplex DNA at the replication fork by translocating in the 5'-3' direction. This creates two antiparallel DNA single strands (ssDNA). The leading ssDNA polymer is the template for DNA polymerase III holoenzyme which synthesizes a continuous strand.</text>
        <dbReference type="EC" id="5.6.2.3"/>
    </reaction>
</comment>
<comment type="catalytic activity">
    <reaction evidence="1">
        <text>ATP + H2O = ADP + phosphate + H(+)</text>
        <dbReference type="Rhea" id="RHEA:13065"/>
        <dbReference type="ChEBI" id="CHEBI:15377"/>
        <dbReference type="ChEBI" id="CHEBI:15378"/>
        <dbReference type="ChEBI" id="CHEBI:30616"/>
        <dbReference type="ChEBI" id="CHEBI:43474"/>
        <dbReference type="ChEBI" id="CHEBI:456216"/>
        <dbReference type="EC" id="5.6.2.3"/>
    </reaction>
</comment>
<comment type="cofactor">
    <cofactor evidence="1">
        <name>[4Fe-4S] cluster</name>
        <dbReference type="ChEBI" id="CHEBI:49883"/>
    </cofactor>
    <text evidence="1">Binds 1 [4Fe-4S] cluster.</text>
</comment>
<comment type="subunit">
    <text evidence="1 4 11">Component of the 7-subunit TFIIH core complex composed of XPB, XPD, TFB1/GTF2H1, GTF2H2/P44, TFB4/GTF2H3, TFB2/GTF2H4 and TFB5/GTF2H5, which is active in NER. The core complex associates with the 3-subunit CDK-activating kinase (CAK) module composed of CYCH1/cyclin H1, CDKD and MAT1/At4g30820 to form the 10-subunit holoenzyme (holo-TFIIH) active in transcription (By similarity). Interacts with GTF2H2/p44 (PubMed:16623910).</text>
</comment>
<comment type="subcellular location">
    <subcellularLocation>
        <location evidence="10">Nucleus</location>
    </subcellularLocation>
</comment>
<comment type="tissue specificity">
    <text evidence="3">Expressed at low levels in all tissues.</text>
</comment>
<comment type="similarity">
    <text evidence="10">Belongs to the helicase family. RAD3/XPD subfamily.</text>
</comment>
<comment type="sequence caution" evidence="10">
    <conflict type="erroneous gene model prediction">
        <sequence resource="EMBL-CDS" id="AAC72116"/>
    </conflict>
</comment>
<organism>
    <name type="scientific">Arabidopsis thaliana</name>
    <name type="common">Mouse-ear cress</name>
    <dbReference type="NCBI Taxonomy" id="3702"/>
    <lineage>
        <taxon>Eukaryota</taxon>
        <taxon>Viridiplantae</taxon>
        <taxon>Streptophyta</taxon>
        <taxon>Embryophyta</taxon>
        <taxon>Tracheophyta</taxon>
        <taxon>Spermatophyta</taxon>
        <taxon>Magnoliopsida</taxon>
        <taxon>eudicotyledons</taxon>
        <taxon>Gunneridae</taxon>
        <taxon>Pentapetalae</taxon>
        <taxon>rosids</taxon>
        <taxon>malvids</taxon>
        <taxon>Brassicales</taxon>
        <taxon>Brassicaceae</taxon>
        <taxon>Camelineae</taxon>
        <taxon>Arabidopsis</taxon>
    </lineage>
</organism>
<name>ERCC2_ARATH</name>
<gene>
    <name evidence="8" type="primary">XPD</name>
    <name evidence="6 9" type="synonym">UVH6</name>
    <name type="ordered locus">At1g03190</name>
    <name type="ORF">F15K9.20</name>
</gene>
<feature type="chain" id="PRO_0000101982" description="General transcription and DNA repair factor IIH helicase subunit XPD">
    <location>
        <begin position="1"/>
        <end position="758"/>
    </location>
</feature>
<feature type="domain" description="Helicase ATP-binding" evidence="2">
    <location>
        <begin position="7"/>
        <end position="285"/>
    </location>
</feature>
<feature type="short sequence motif" description="DEAH box">
    <location>
        <begin position="234"/>
        <end position="238"/>
    </location>
</feature>
<feature type="binding site" evidence="2">
    <location>
        <begin position="42"/>
        <end position="49"/>
    </location>
    <ligand>
        <name>ATP</name>
        <dbReference type="ChEBI" id="CHEBI:30616"/>
    </ligand>
</feature>
<feature type="binding site" evidence="1">
    <location>
        <position position="116"/>
    </location>
    <ligand>
        <name>[4Fe-4S] cluster</name>
        <dbReference type="ChEBI" id="CHEBI:49883"/>
    </ligand>
</feature>
<feature type="binding site" evidence="1">
    <location>
        <position position="134"/>
    </location>
    <ligand>
        <name>[4Fe-4S] cluster</name>
        <dbReference type="ChEBI" id="CHEBI:49883"/>
    </ligand>
</feature>
<feature type="binding site" evidence="1">
    <location>
        <position position="155"/>
    </location>
    <ligand>
        <name>[4Fe-4S] cluster</name>
        <dbReference type="ChEBI" id="CHEBI:49883"/>
    </ligand>
</feature>
<feature type="binding site" evidence="1">
    <location>
        <position position="190"/>
    </location>
    <ligand>
        <name>[4Fe-4S] cluster</name>
        <dbReference type="ChEBI" id="CHEBI:49883"/>
    </ligand>
</feature>
<feature type="mutagenesis site" description="In uvh6-1; confers increased sensitivity to UV light and heat, yellow-green leaf coloration, and mild growth defects." evidence="3">
    <original>G</original>
    <variation>E</variation>
    <location>
        <position position="521"/>
    </location>
</feature>
<feature type="sequence conflict" description="In Ref. 2; AAF14582." evidence="10" ref="2">
    <original>K</original>
    <variation>E</variation>
    <location>
        <position position="559"/>
    </location>
</feature>
<accession>Q8W4M7</accession>
<accession>Q9SE44</accession>
<accession>Q9ZVS1</accession>
<keyword id="KW-0004">4Fe-4S</keyword>
<keyword id="KW-0067">ATP-binding</keyword>
<keyword id="KW-0227">DNA damage</keyword>
<keyword id="KW-0234">DNA repair</keyword>
<keyword id="KW-0238">DNA-binding</keyword>
<keyword id="KW-0347">Helicase</keyword>
<keyword id="KW-0378">Hydrolase</keyword>
<keyword id="KW-0408">Iron</keyword>
<keyword id="KW-0411">Iron-sulfur</keyword>
<keyword id="KW-0413">Isomerase</keyword>
<keyword id="KW-0479">Metal-binding</keyword>
<keyword id="KW-0547">Nucleotide-binding</keyword>
<keyword id="KW-0539">Nucleus</keyword>
<keyword id="KW-1185">Reference proteome</keyword>
<keyword id="KW-0804">Transcription</keyword>
<keyword id="KW-0805">Transcription regulation</keyword>
<dbReference type="EC" id="5.6.2.3" evidence="1"/>
<dbReference type="EMBL" id="AY090788">
    <property type="protein sequence ID" value="AAM10793.1"/>
    <property type="molecule type" value="mRNA"/>
</dbReference>
<dbReference type="EMBL" id="AF188623">
    <property type="protein sequence ID" value="AAF14582.1"/>
    <property type="molecule type" value="mRNA"/>
</dbReference>
<dbReference type="EMBL" id="AC005278">
    <property type="protein sequence ID" value="AAC72116.1"/>
    <property type="status" value="ALT_SEQ"/>
    <property type="molecule type" value="Genomic_DNA"/>
</dbReference>
<dbReference type="EMBL" id="CP002684">
    <property type="protein sequence ID" value="AEE27542.1"/>
    <property type="molecule type" value="Genomic_DNA"/>
</dbReference>
<dbReference type="EMBL" id="CP002684">
    <property type="protein sequence ID" value="AEE27543.1"/>
    <property type="molecule type" value="Genomic_DNA"/>
</dbReference>
<dbReference type="EMBL" id="AY062471">
    <property type="protein sequence ID" value="AAL32549.1"/>
    <property type="molecule type" value="mRNA"/>
</dbReference>
<dbReference type="EMBL" id="AY090915">
    <property type="protein sequence ID" value="AAM13910.1"/>
    <property type="molecule type" value="mRNA"/>
</dbReference>
<dbReference type="EMBL" id="BT010344">
    <property type="protein sequence ID" value="AAQ56787.1"/>
    <property type="molecule type" value="mRNA"/>
</dbReference>
<dbReference type="PIR" id="C86163">
    <property type="entry name" value="C86163"/>
</dbReference>
<dbReference type="RefSeq" id="NP_171818.1">
    <property type="nucleotide sequence ID" value="NM_100201.3"/>
</dbReference>
<dbReference type="RefSeq" id="NP_849584.1">
    <property type="nucleotide sequence ID" value="NM_179253.1"/>
</dbReference>
<dbReference type="SMR" id="Q8W4M7"/>
<dbReference type="BioGRID" id="24792">
    <property type="interactions" value="11"/>
</dbReference>
<dbReference type="FunCoup" id="Q8W4M7">
    <property type="interactions" value="4230"/>
</dbReference>
<dbReference type="IntAct" id="Q8W4M7">
    <property type="interactions" value="10"/>
</dbReference>
<dbReference type="STRING" id="3702.Q8W4M7"/>
<dbReference type="iPTMnet" id="Q8W4M7"/>
<dbReference type="PaxDb" id="3702-AT1G03190.2"/>
<dbReference type="ProteomicsDB" id="220670"/>
<dbReference type="EnsemblPlants" id="AT1G03190.1">
    <property type="protein sequence ID" value="AT1G03190.1"/>
    <property type="gene ID" value="AT1G03190"/>
</dbReference>
<dbReference type="EnsemblPlants" id="AT1G03190.2">
    <property type="protein sequence ID" value="AT1G03190.2"/>
    <property type="gene ID" value="AT1G03190"/>
</dbReference>
<dbReference type="GeneID" id="839557"/>
<dbReference type="Gramene" id="AT1G03190.1">
    <property type="protein sequence ID" value="AT1G03190.1"/>
    <property type="gene ID" value="AT1G03190"/>
</dbReference>
<dbReference type="Gramene" id="AT1G03190.2">
    <property type="protein sequence ID" value="AT1G03190.2"/>
    <property type="gene ID" value="AT1G03190"/>
</dbReference>
<dbReference type="KEGG" id="ath:AT1G03190"/>
<dbReference type="Araport" id="AT1G03190"/>
<dbReference type="TAIR" id="AT1G03190">
    <property type="gene designation" value="UVH6"/>
</dbReference>
<dbReference type="eggNOG" id="KOG1131">
    <property type="taxonomic scope" value="Eukaryota"/>
</dbReference>
<dbReference type="HOGENOM" id="CLU_011312_1_0_1"/>
<dbReference type="InParanoid" id="Q8W4M7"/>
<dbReference type="OMA" id="WQTMGIL"/>
<dbReference type="OrthoDB" id="272481at2759"/>
<dbReference type="PhylomeDB" id="Q8W4M7"/>
<dbReference type="PRO" id="PR:Q8W4M7"/>
<dbReference type="Proteomes" id="UP000006548">
    <property type="component" value="Chromosome 1"/>
</dbReference>
<dbReference type="ExpressionAtlas" id="Q8W4M7">
    <property type="expression patterns" value="baseline and differential"/>
</dbReference>
<dbReference type="GO" id="GO:0005634">
    <property type="term" value="C:nucleus"/>
    <property type="evidence" value="ECO:0007669"/>
    <property type="project" value="UniProtKB-SubCell"/>
</dbReference>
<dbReference type="GO" id="GO:0051539">
    <property type="term" value="F:4 iron, 4 sulfur cluster binding"/>
    <property type="evidence" value="ECO:0007669"/>
    <property type="project" value="UniProtKB-KW"/>
</dbReference>
<dbReference type="GO" id="GO:0005524">
    <property type="term" value="F:ATP binding"/>
    <property type="evidence" value="ECO:0007669"/>
    <property type="project" value="UniProtKB-KW"/>
</dbReference>
<dbReference type="GO" id="GO:0016887">
    <property type="term" value="F:ATP hydrolysis activity"/>
    <property type="evidence" value="ECO:0007669"/>
    <property type="project" value="RHEA"/>
</dbReference>
<dbReference type="GO" id="GO:0003677">
    <property type="term" value="F:DNA binding"/>
    <property type="evidence" value="ECO:0007669"/>
    <property type="project" value="UniProtKB-KW"/>
</dbReference>
<dbReference type="GO" id="GO:0003678">
    <property type="term" value="F:DNA helicase activity"/>
    <property type="evidence" value="ECO:0007669"/>
    <property type="project" value="InterPro"/>
</dbReference>
<dbReference type="GO" id="GO:0046872">
    <property type="term" value="F:metal ion binding"/>
    <property type="evidence" value="ECO:0007669"/>
    <property type="project" value="UniProtKB-KW"/>
</dbReference>
<dbReference type="GO" id="GO:0006281">
    <property type="term" value="P:DNA repair"/>
    <property type="evidence" value="ECO:0000315"/>
    <property type="project" value="TAIR"/>
</dbReference>
<dbReference type="GO" id="GO:0006289">
    <property type="term" value="P:nucleotide-excision repair"/>
    <property type="evidence" value="ECO:0007669"/>
    <property type="project" value="InterPro"/>
</dbReference>
<dbReference type="GO" id="GO:0009408">
    <property type="term" value="P:response to heat"/>
    <property type="evidence" value="ECO:0000315"/>
    <property type="project" value="TAIR"/>
</dbReference>
<dbReference type="GO" id="GO:0009411">
    <property type="term" value="P:response to UV"/>
    <property type="evidence" value="ECO:0000315"/>
    <property type="project" value="TAIR"/>
</dbReference>
<dbReference type="CDD" id="cd18788">
    <property type="entry name" value="SF2_C_XPD"/>
    <property type="match status" value="1"/>
</dbReference>
<dbReference type="FunFam" id="1.10.275.40:FF:000001">
    <property type="entry name" value="DNA repair helicase (Rad3)"/>
    <property type="match status" value="1"/>
</dbReference>
<dbReference type="FunFam" id="3.40.50.300:FF:000135">
    <property type="entry name" value="DNA repair helicase RAD3, putative"/>
    <property type="match status" value="1"/>
</dbReference>
<dbReference type="FunFam" id="3.40.50.300:FF:000128">
    <property type="entry name" value="Putative DNA repair helicase RAD3"/>
    <property type="match status" value="1"/>
</dbReference>
<dbReference type="FunFam" id="3.40.50.300:FF:000381">
    <property type="entry name" value="TFIIH basal transcription factor complex helicase subunit"/>
    <property type="match status" value="1"/>
</dbReference>
<dbReference type="Gene3D" id="3.40.50.300">
    <property type="entry name" value="P-loop containing nucleotide triphosphate hydrolases"/>
    <property type="match status" value="2"/>
</dbReference>
<dbReference type="InterPro" id="IPR006555">
    <property type="entry name" value="ATP-dep_Helicase_C"/>
</dbReference>
<dbReference type="InterPro" id="IPR045028">
    <property type="entry name" value="DinG/Rad3-like"/>
</dbReference>
<dbReference type="InterPro" id="IPR002464">
    <property type="entry name" value="DNA/RNA_helicase_DEAH_CS"/>
</dbReference>
<dbReference type="InterPro" id="IPR010643">
    <property type="entry name" value="HBB"/>
</dbReference>
<dbReference type="InterPro" id="IPR014013">
    <property type="entry name" value="Helic_SF1/SF2_ATP-bd_DinG/Rad3"/>
</dbReference>
<dbReference type="InterPro" id="IPR006554">
    <property type="entry name" value="Helicase-like_DEXD_c2"/>
</dbReference>
<dbReference type="InterPro" id="IPR027417">
    <property type="entry name" value="P-loop_NTPase"/>
</dbReference>
<dbReference type="InterPro" id="IPR010614">
    <property type="entry name" value="RAD3-like_helicase_DEAD"/>
</dbReference>
<dbReference type="InterPro" id="IPR013020">
    <property type="entry name" value="Rad3/Chl1-like"/>
</dbReference>
<dbReference type="InterPro" id="IPR001945">
    <property type="entry name" value="RAD3/XPD"/>
</dbReference>
<dbReference type="NCBIfam" id="TIGR00604">
    <property type="entry name" value="rad3"/>
    <property type="match status" value="1"/>
</dbReference>
<dbReference type="PANTHER" id="PTHR11472">
    <property type="entry name" value="DNA REPAIR DEAD HELICASE RAD3/XP-D SUBFAMILY MEMBER"/>
    <property type="match status" value="1"/>
</dbReference>
<dbReference type="PANTHER" id="PTHR11472:SF1">
    <property type="entry name" value="GENERAL TRANSCRIPTION AND DNA REPAIR FACTOR IIH HELICASE SUBUNIT XPD"/>
    <property type="match status" value="1"/>
</dbReference>
<dbReference type="Pfam" id="PF06733">
    <property type="entry name" value="DEAD_2"/>
    <property type="match status" value="1"/>
</dbReference>
<dbReference type="Pfam" id="PF06777">
    <property type="entry name" value="HBB"/>
    <property type="match status" value="1"/>
</dbReference>
<dbReference type="Pfam" id="PF13307">
    <property type="entry name" value="Helicase_C_2"/>
    <property type="match status" value="1"/>
</dbReference>
<dbReference type="PRINTS" id="PR00852">
    <property type="entry name" value="XRODRMPGMNTD"/>
</dbReference>
<dbReference type="SMART" id="SM00488">
    <property type="entry name" value="DEXDc2"/>
    <property type="match status" value="1"/>
</dbReference>
<dbReference type="SMART" id="SM00491">
    <property type="entry name" value="HELICc2"/>
    <property type="match status" value="1"/>
</dbReference>
<dbReference type="SUPFAM" id="SSF52540">
    <property type="entry name" value="P-loop containing nucleoside triphosphate hydrolases"/>
    <property type="match status" value="1"/>
</dbReference>
<dbReference type="PROSITE" id="PS00690">
    <property type="entry name" value="DEAH_ATP_HELICASE"/>
    <property type="match status" value="1"/>
</dbReference>
<dbReference type="PROSITE" id="PS51193">
    <property type="entry name" value="HELICASE_ATP_BIND_2"/>
    <property type="match status" value="1"/>
</dbReference>
<reference key="1">
    <citation type="journal article" date="2003" name="Plant Physiol.">
        <title>Arabidopsis UVH6, a homolog of human XPD and yeast RAD3 DNA repair genes, functions in DNA repair and is essential for plant growth.</title>
        <authorList>
            <person name="Liu Z."/>
            <person name="Hong S.-W."/>
            <person name="Escobar M."/>
            <person name="Vierling E."/>
            <person name="Mitchell D.L."/>
            <person name="Mount D.W."/>
            <person name="Hall J.D."/>
        </authorList>
    </citation>
    <scope>NUCLEOTIDE SEQUENCE [MRNA]</scope>
    <scope>FUNCTION</scope>
    <scope>TISSUE SPECIFICITY</scope>
    <scope>MUTAGENESIS OF GLY-521</scope>
    <source>
        <strain>cv. Columbia</strain>
    </source>
</reference>
<reference key="2">
    <citation type="submission" date="1999-09" db="EMBL/GenBank/DDBJ databases">
        <title>A Rad3/XP-D/ERCC2 homolog from Arabidopsis thaliana.</title>
        <authorList>
            <person name="Vonarx E.J."/>
            <person name="Kunz B.A."/>
        </authorList>
    </citation>
    <scope>NUCLEOTIDE SEQUENCE [MRNA]</scope>
</reference>
<reference key="3">
    <citation type="journal article" date="2000" name="Nature">
        <title>Sequence and analysis of chromosome 1 of the plant Arabidopsis thaliana.</title>
        <authorList>
            <person name="Theologis A."/>
            <person name="Ecker J.R."/>
            <person name="Palm C.J."/>
            <person name="Federspiel N.A."/>
            <person name="Kaul S."/>
            <person name="White O."/>
            <person name="Alonso J."/>
            <person name="Altafi H."/>
            <person name="Araujo R."/>
            <person name="Bowman C.L."/>
            <person name="Brooks S.Y."/>
            <person name="Buehler E."/>
            <person name="Chan A."/>
            <person name="Chao Q."/>
            <person name="Chen H."/>
            <person name="Cheuk R.F."/>
            <person name="Chin C.W."/>
            <person name="Chung M.K."/>
            <person name="Conn L."/>
            <person name="Conway A.B."/>
            <person name="Conway A.R."/>
            <person name="Creasy T.H."/>
            <person name="Dewar K."/>
            <person name="Dunn P."/>
            <person name="Etgu P."/>
            <person name="Feldblyum T.V."/>
            <person name="Feng J.-D."/>
            <person name="Fong B."/>
            <person name="Fujii C.Y."/>
            <person name="Gill J.E."/>
            <person name="Goldsmith A.D."/>
            <person name="Haas B."/>
            <person name="Hansen N.F."/>
            <person name="Hughes B."/>
            <person name="Huizar L."/>
            <person name="Hunter J.L."/>
            <person name="Jenkins J."/>
            <person name="Johnson-Hopson C."/>
            <person name="Khan S."/>
            <person name="Khaykin E."/>
            <person name="Kim C.J."/>
            <person name="Koo H.L."/>
            <person name="Kremenetskaia I."/>
            <person name="Kurtz D.B."/>
            <person name="Kwan A."/>
            <person name="Lam B."/>
            <person name="Langin-Hooper S."/>
            <person name="Lee A."/>
            <person name="Lee J.M."/>
            <person name="Lenz C.A."/>
            <person name="Li J.H."/>
            <person name="Li Y.-P."/>
            <person name="Lin X."/>
            <person name="Liu S.X."/>
            <person name="Liu Z.A."/>
            <person name="Luros J.S."/>
            <person name="Maiti R."/>
            <person name="Marziali A."/>
            <person name="Militscher J."/>
            <person name="Miranda M."/>
            <person name="Nguyen M."/>
            <person name="Nierman W.C."/>
            <person name="Osborne B.I."/>
            <person name="Pai G."/>
            <person name="Peterson J."/>
            <person name="Pham P.K."/>
            <person name="Rizzo M."/>
            <person name="Rooney T."/>
            <person name="Rowley D."/>
            <person name="Sakano H."/>
            <person name="Salzberg S.L."/>
            <person name="Schwartz J.R."/>
            <person name="Shinn P."/>
            <person name="Southwick A.M."/>
            <person name="Sun H."/>
            <person name="Tallon L.J."/>
            <person name="Tambunga G."/>
            <person name="Toriumi M.J."/>
            <person name="Town C.D."/>
            <person name="Utterback T."/>
            <person name="Van Aken S."/>
            <person name="Vaysberg M."/>
            <person name="Vysotskaia V.S."/>
            <person name="Walker M."/>
            <person name="Wu D."/>
            <person name="Yu G."/>
            <person name="Fraser C.M."/>
            <person name="Venter J.C."/>
            <person name="Davis R.W."/>
        </authorList>
    </citation>
    <scope>NUCLEOTIDE SEQUENCE [LARGE SCALE GENOMIC DNA]</scope>
    <source>
        <strain>cv. Columbia</strain>
    </source>
</reference>
<reference key="4">
    <citation type="journal article" date="2017" name="Plant J.">
        <title>Araport11: a complete reannotation of the Arabidopsis thaliana reference genome.</title>
        <authorList>
            <person name="Cheng C.Y."/>
            <person name="Krishnakumar V."/>
            <person name="Chan A.P."/>
            <person name="Thibaud-Nissen F."/>
            <person name="Schobel S."/>
            <person name="Town C.D."/>
        </authorList>
    </citation>
    <scope>GENOME REANNOTATION</scope>
    <source>
        <strain>cv. Columbia</strain>
    </source>
</reference>
<reference key="5">
    <citation type="journal article" date="2003" name="Science">
        <title>Empirical analysis of transcriptional activity in the Arabidopsis genome.</title>
        <authorList>
            <person name="Yamada K."/>
            <person name="Lim J."/>
            <person name="Dale J.M."/>
            <person name="Chen H."/>
            <person name="Shinn P."/>
            <person name="Palm C.J."/>
            <person name="Southwick A.M."/>
            <person name="Wu H.C."/>
            <person name="Kim C.J."/>
            <person name="Nguyen M."/>
            <person name="Pham P.K."/>
            <person name="Cheuk R.F."/>
            <person name="Karlin-Newmann G."/>
            <person name="Liu S.X."/>
            <person name="Lam B."/>
            <person name="Sakano H."/>
            <person name="Wu T."/>
            <person name="Yu G."/>
            <person name="Miranda M."/>
            <person name="Quach H.L."/>
            <person name="Tripp M."/>
            <person name="Chang C.H."/>
            <person name="Lee J.M."/>
            <person name="Toriumi M.J."/>
            <person name="Chan M.M."/>
            <person name="Tang C.C."/>
            <person name="Onodera C.S."/>
            <person name="Deng J.M."/>
            <person name="Akiyama K."/>
            <person name="Ansari Y."/>
            <person name="Arakawa T."/>
            <person name="Banh J."/>
            <person name="Banno F."/>
            <person name="Bowser L."/>
            <person name="Brooks S.Y."/>
            <person name="Carninci P."/>
            <person name="Chao Q."/>
            <person name="Choy N."/>
            <person name="Enju A."/>
            <person name="Goldsmith A.D."/>
            <person name="Gurjal M."/>
            <person name="Hansen N.F."/>
            <person name="Hayashizaki Y."/>
            <person name="Johnson-Hopson C."/>
            <person name="Hsuan V.W."/>
            <person name="Iida K."/>
            <person name="Karnes M."/>
            <person name="Khan S."/>
            <person name="Koesema E."/>
            <person name="Ishida J."/>
            <person name="Jiang P.X."/>
            <person name="Jones T."/>
            <person name="Kawai J."/>
            <person name="Kamiya A."/>
            <person name="Meyers C."/>
            <person name="Nakajima M."/>
            <person name="Narusaka M."/>
            <person name="Seki M."/>
            <person name="Sakurai T."/>
            <person name="Satou M."/>
            <person name="Tamse R."/>
            <person name="Vaysberg M."/>
            <person name="Wallender E.K."/>
            <person name="Wong C."/>
            <person name="Yamamura Y."/>
            <person name="Yuan S."/>
            <person name="Shinozaki K."/>
            <person name="Davis R.W."/>
            <person name="Theologis A."/>
            <person name="Ecker J.R."/>
        </authorList>
    </citation>
    <scope>NUCLEOTIDE SEQUENCE [LARGE SCALE MRNA]</scope>
    <source>
        <strain>cv. Columbia</strain>
    </source>
</reference>
<reference key="6">
    <citation type="journal article" date="1995" name="Genetics">
        <title>Radiation-sensitive mutants of Arabidopsis thaliana.</title>
        <authorList>
            <person name="Jenkins M.E."/>
            <person name="Harlow G.R."/>
            <person name="Liu Z."/>
            <person name="Shotwell M.A."/>
            <person name="Ma J."/>
            <person name="Mount D.W."/>
        </authorList>
    </citation>
    <scope>MUTANT UVH6-1</scope>
</reference>
<reference key="7">
    <citation type="journal article" date="1997" name="Plant Physiol.">
        <title>Evidence that heat and ultraviolet radiation activate a common stress-response program in plants that is altered in the uvh6 mutant of Arabidopsis thaliana.</title>
        <authorList>
            <person name="Jenkins M.E."/>
            <person name="Suzuki T.C."/>
            <person name="Mount D.W."/>
        </authorList>
    </citation>
    <scope>FUNCTION</scope>
</reference>
<reference key="8">
    <citation type="journal article" date="2005" name="Environ. Mol. Mutagen.">
        <title>Components of nucleotide excision repair and DNA damage tolerance in Arabidopsis thaliana.</title>
        <authorList>
            <person name="Kunz B.A."/>
            <person name="Anderson H.J."/>
            <person name="Osmond M.J."/>
            <person name="Vonarx E.J."/>
        </authorList>
    </citation>
    <scope>COMPONENT OF TFIIH CORE COMPLEX</scope>
    <scope>NOMENCLATURE</scope>
</reference>
<reference key="9">
    <citation type="journal article" date="2006" name="Plant J.">
        <title>Arabidopsis homologue of human transcription factor IIH/nucleotide excision repair factor p44 can function in transcription and DNA repair and interacts with AtXPD.</title>
        <authorList>
            <person name="Vonarx E.J."/>
            <person name="Tabone E.K."/>
            <person name="Osmond M.J."/>
            <person name="Anderson H.J."/>
            <person name="Kunz B.A."/>
        </authorList>
    </citation>
    <scope>INTERACTION WITH GTF2H2</scope>
</reference>
<reference key="10">
    <citation type="journal article" date="2013" name="PLoS ONE">
        <title>Genome-wide comparative in silico analysis of the RNA helicase gene family in Zea mays and Glycine max: a comparison with Arabidopsis and Oryza sativa.</title>
        <authorList>
            <person name="Xu R."/>
            <person name="Zhang S."/>
            <person name="Huang J."/>
            <person name="Zheng C."/>
        </authorList>
    </citation>
    <scope>GENE FAMILY</scope>
</reference>
<sequence length="758" mass="86236">MIFKIEDVTVYFPYDNIYPEQYEYMVELKRALDAKGHCLLEMPTGTGKTIALLSLITSYRLSRPDSPIKLVYCTRTVHEMEKTLGELKLLHDYQVRHLGTQAKILALGLSSRKNLCVNTKVLAAENRDSVDAACRKRTASWVRALSTENPNVELCDFFENYEKAAENALLPPGVYTLEDLRAFGKNRGWCPYFLARHMIQFANVIVYSYQYLLDPKVAGFISKELQKESVVVFDEAHNIDNVCIEALSVSVRRVTLEGANRNLNKIRQEIDRFKATDAGRLRAEYNRLVEGLALRGDLSGGDQWLANPALPHDILKEAVPGNIRRAEHFVHVLRRLLQYLGVRLDTENVEKESPVSFVSSLNSQAGIEQKTLKFCYDRLQSLMLTLEITDTDEFLPIQTVCDFATLVGTYARGFSIIIEPYDERMPHIPDPILQLSCHDASLAIKPVFDRFQSVVITSGTLSPIDLYPRLLNFTPVVSRSFKMSMTRDCICPMVLTRGSDQLPVSTKFDMRSDPGVVRNYGKLLVEMVSIVPDGVVCFFVSYSYMDGIIATWNETGILKEIMQQKLVFIETQDVVETTLALDNYRRACDCGRGAVFFSVARGKVAEGIDFDRHYGRLVVMYGVPFQYTLSKILRARLEYLHDTFQIKEGDFLTFDALRQAAQCVGRVIRSKADYGMMIFADKRYSRHDKRSKLPGWILSHLRDAHLNLSTDMAIHIAREFLRKMAQPYDKAGTMGRKTLLTQEDLEKMAETGVQDMAY</sequence>
<evidence type="ECO:0000250" key="1">
    <source>
        <dbReference type="UniProtKB" id="P18074"/>
    </source>
</evidence>
<evidence type="ECO:0000255" key="2">
    <source>
        <dbReference type="PROSITE-ProRule" id="PRU00541"/>
    </source>
</evidence>
<evidence type="ECO:0000269" key="3">
    <source>
    </source>
</evidence>
<evidence type="ECO:0000269" key="4">
    <source>
    </source>
</evidence>
<evidence type="ECO:0000269" key="5">
    <source>
    </source>
</evidence>
<evidence type="ECO:0000303" key="6">
    <source>
    </source>
</evidence>
<evidence type="ECO:0000303" key="7">
    <source>
    </source>
</evidence>
<evidence type="ECO:0000303" key="8">
    <source>
    </source>
</evidence>
<evidence type="ECO:0000303" key="9">
    <source>
    </source>
</evidence>
<evidence type="ECO:0000305" key="10"/>
<evidence type="ECO:0000305" key="11">
    <source>
    </source>
</evidence>